<evidence type="ECO:0000255" key="1">
    <source>
        <dbReference type="HAMAP-Rule" id="MF_00091"/>
    </source>
</evidence>
<keyword id="KW-0071">Autoinducer synthesis</keyword>
<keyword id="KW-0408">Iron</keyword>
<keyword id="KW-0456">Lyase</keyword>
<keyword id="KW-0479">Metal-binding</keyword>
<keyword id="KW-0673">Quorum sensing</keyword>
<organism>
    <name type="scientific">Bacillus pumilus (strain SAFR-032)</name>
    <dbReference type="NCBI Taxonomy" id="315750"/>
    <lineage>
        <taxon>Bacteria</taxon>
        <taxon>Bacillati</taxon>
        <taxon>Bacillota</taxon>
        <taxon>Bacilli</taxon>
        <taxon>Bacillales</taxon>
        <taxon>Bacillaceae</taxon>
        <taxon>Bacillus</taxon>
    </lineage>
</organism>
<protein>
    <recommendedName>
        <fullName evidence="1">S-ribosylhomocysteine lyase</fullName>
        <ecNumber evidence="1">4.4.1.21</ecNumber>
    </recommendedName>
    <alternativeName>
        <fullName evidence="1">AI-2 synthesis protein</fullName>
    </alternativeName>
    <alternativeName>
        <fullName evidence="1">Autoinducer-2 production protein LuxS</fullName>
    </alternativeName>
</protein>
<accession>A8FGJ6</accession>
<feature type="chain" id="PRO_1000057604" description="S-ribosylhomocysteine lyase">
    <location>
        <begin position="1"/>
        <end position="157"/>
    </location>
</feature>
<feature type="binding site" evidence="1">
    <location>
        <position position="54"/>
    </location>
    <ligand>
        <name>Fe cation</name>
        <dbReference type="ChEBI" id="CHEBI:24875"/>
    </ligand>
</feature>
<feature type="binding site" evidence="1">
    <location>
        <position position="58"/>
    </location>
    <ligand>
        <name>Fe cation</name>
        <dbReference type="ChEBI" id="CHEBI:24875"/>
    </ligand>
</feature>
<feature type="binding site" evidence="1">
    <location>
        <position position="126"/>
    </location>
    <ligand>
        <name>Fe cation</name>
        <dbReference type="ChEBI" id="CHEBI:24875"/>
    </ligand>
</feature>
<reference key="1">
    <citation type="journal article" date="2007" name="PLoS ONE">
        <title>Paradoxical DNA repair and peroxide resistance gene conservation in Bacillus pumilus SAFR-032.</title>
        <authorList>
            <person name="Gioia J."/>
            <person name="Yerrapragada S."/>
            <person name="Qin X."/>
            <person name="Jiang H."/>
            <person name="Igboeli O.C."/>
            <person name="Muzny D."/>
            <person name="Dugan-Rocha S."/>
            <person name="Ding Y."/>
            <person name="Hawes A."/>
            <person name="Liu W."/>
            <person name="Perez L."/>
            <person name="Kovar C."/>
            <person name="Dinh H."/>
            <person name="Lee S."/>
            <person name="Nazareth L."/>
            <person name="Blyth P."/>
            <person name="Holder M."/>
            <person name="Buhay C."/>
            <person name="Tirumalai M.R."/>
            <person name="Liu Y."/>
            <person name="Dasgupta I."/>
            <person name="Bokhetache L."/>
            <person name="Fujita M."/>
            <person name="Karouia F."/>
            <person name="Eswara Moorthy P."/>
            <person name="Siefert J."/>
            <person name="Uzman A."/>
            <person name="Buzumbo P."/>
            <person name="Verma A."/>
            <person name="Zwiya H."/>
            <person name="McWilliams B.D."/>
            <person name="Olowu A."/>
            <person name="Clinkenbeard K.D."/>
            <person name="Newcombe D."/>
            <person name="Golebiewski L."/>
            <person name="Petrosino J.F."/>
            <person name="Nicholson W.L."/>
            <person name="Fox G.E."/>
            <person name="Venkateswaran K."/>
            <person name="Highlander S.K."/>
            <person name="Weinstock G.M."/>
        </authorList>
    </citation>
    <scope>NUCLEOTIDE SEQUENCE [LARGE SCALE GENOMIC DNA]</scope>
    <source>
        <strain>SAFR-032</strain>
    </source>
</reference>
<dbReference type="EC" id="4.4.1.21" evidence="1"/>
<dbReference type="EMBL" id="CP000813">
    <property type="protein sequence ID" value="ABV63363.1"/>
    <property type="molecule type" value="Genomic_DNA"/>
</dbReference>
<dbReference type="RefSeq" id="WP_012010994.1">
    <property type="nucleotide sequence ID" value="NZ_VEIS01000006.1"/>
</dbReference>
<dbReference type="SMR" id="A8FGJ6"/>
<dbReference type="STRING" id="315750.BPUM_2705"/>
<dbReference type="GeneID" id="5621971"/>
<dbReference type="KEGG" id="bpu:BPUM_2705"/>
<dbReference type="eggNOG" id="COG1854">
    <property type="taxonomic scope" value="Bacteria"/>
</dbReference>
<dbReference type="HOGENOM" id="CLU_107531_2_0_9"/>
<dbReference type="OrthoDB" id="9788129at2"/>
<dbReference type="Proteomes" id="UP000001355">
    <property type="component" value="Chromosome"/>
</dbReference>
<dbReference type="GO" id="GO:0005506">
    <property type="term" value="F:iron ion binding"/>
    <property type="evidence" value="ECO:0007669"/>
    <property type="project" value="InterPro"/>
</dbReference>
<dbReference type="GO" id="GO:0043768">
    <property type="term" value="F:S-ribosylhomocysteine lyase activity"/>
    <property type="evidence" value="ECO:0007669"/>
    <property type="project" value="UniProtKB-UniRule"/>
</dbReference>
<dbReference type="GO" id="GO:0009372">
    <property type="term" value="P:quorum sensing"/>
    <property type="evidence" value="ECO:0007669"/>
    <property type="project" value="UniProtKB-UniRule"/>
</dbReference>
<dbReference type="Gene3D" id="3.30.1360.80">
    <property type="entry name" value="S-ribosylhomocysteinase (LuxS)"/>
    <property type="match status" value="1"/>
</dbReference>
<dbReference type="HAMAP" id="MF_00091">
    <property type="entry name" value="LuxS"/>
    <property type="match status" value="1"/>
</dbReference>
<dbReference type="InterPro" id="IPR037005">
    <property type="entry name" value="LuxS_sf"/>
</dbReference>
<dbReference type="InterPro" id="IPR011249">
    <property type="entry name" value="Metalloenz_LuxS/M16"/>
</dbReference>
<dbReference type="InterPro" id="IPR003815">
    <property type="entry name" value="S-ribosylhomocysteinase"/>
</dbReference>
<dbReference type="NCBIfam" id="NF002603">
    <property type="entry name" value="PRK02260.1-3"/>
    <property type="match status" value="1"/>
</dbReference>
<dbReference type="PANTHER" id="PTHR35799">
    <property type="entry name" value="S-RIBOSYLHOMOCYSTEINE LYASE"/>
    <property type="match status" value="1"/>
</dbReference>
<dbReference type="PANTHER" id="PTHR35799:SF1">
    <property type="entry name" value="S-RIBOSYLHOMOCYSTEINE LYASE"/>
    <property type="match status" value="1"/>
</dbReference>
<dbReference type="Pfam" id="PF02664">
    <property type="entry name" value="LuxS"/>
    <property type="match status" value="1"/>
</dbReference>
<dbReference type="PIRSF" id="PIRSF006160">
    <property type="entry name" value="AI2"/>
    <property type="match status" value="1"/>
</dbReference>
<dbReference type="PRINTS" id="PR01487">
    <property type="entry name" value="LUXSPROTEIN"/>
</dbReference>
<dbReference type="SUPFAM" id="SSF63411">
    <property type="entry name" value="LuxS/MPP-like metallohydrolase"/>
    <property type="match status" value="1"/>
</dbReference>
<sequence length="157" mass="17757">MPSVESFELDHNAVKAPYVRHCGVHKVGSDGEVNKFDIRFCQPNKQAMKPDTIHTLEHLLAFNIRTHSEKYDHFDIIDISPMGCQTGYYLVVSGAPTPEEIVELLDATFKDAVEVTEIPAANEEQCGQAKLHDLEGAKRLMRFWLSQDQEELLKVFG</sequence>
<name>LUXS_BACP2</name>
<gene>
    <name evidence="1" type="primary">luxS</name>
    <name type="ordered locus">BPUM_2705</name>
</gene>
<proteinExistence type="inferred from homology"/>
<comment type="function">
    <text evidence="1">Involved in the synthesis of autoinducer 2 (AI-2) which is secreted by bacteria and is used to communicate both the cell density and the metabolic potential of the environment. The regulation of gene expression in response to changes in cell density is called quorum sensing. Catalyzes the transformation of S-ribosylhomocysteine (RHC) to homocysteine (HC) and 4,5-dihydroxy-2,3-pentadione (DPD).</text>
</comment>
<comment type="catalytic activity">
    <reaction evidence="1">
        <text>S-(5-deoxy-D-ribos-5-yl)-L-homocysteine = (S)-4,5-dihydroxypentane-2,3-dione + L-homocysteine</text>
        <dbReference type="Rhea" id="RHEA:17753"/>
        <dbReference type="ChEBI" id="CHEBI:29484"/>
        <dbReference type="ChEBI" id="CHEBI:58195"/>
        <dbReference type="ChEBI" id="CHEBI:58199"/>
        <dbReference type="EC" id="4.4.1.21"/>
    </reaction>
</comment>
<comment type="cofactor">
    <cofactor evidence="1">
        <name>Fe cation</name>
        <dbReference type="ChEBI" id="CHEBI:24875"/>
    </cofactor>
    <text evidence="1">Binds 1 Fe cation per subunit.</text>
</comment>
<comment type="subunit">
    <text evidence="1">Homodimer.</text>
</comment>
<comment type="similarity">
    <text evidence="1">Belongs to the LuxS family.</text>
</comment>